<reference key="1">
    <citation type="journal article" date="2002" name="Proc. Natl. Acad. Sci. U.S.A.">
        <title>The genome sequence of Bifidobacterium longum reflects its adaptation to the human gastrointestinal tract.</title>
        <authorList>
            <person name="Schell M.A."/>
            <person name="Karmirantzou M."/>
            <person name="Snel B."/>
            <person name="Vilanova D."/>
            <person name="Berger B."/>
            <person name="Pessi G."/>
            <person name="Zwahlen M.-C."/>
            <person name="Desiere F."/>
            <person name="Bork P."/>
            <person name="Delley M."/>
            <person name="Pridmore R.D."/>
            <person name="Arigoni F."/>
        </authorList>
    </citation>
    <scope>NUCLEOTIDE SEQUENCE [LARGE SCALE GENOMIC DNA]</scope>
    <source>
        <strain>NCC 2705</strain>
    </source>
</reference>
<comment type="function">
    <text evidence="1">Forms part of the ribosomal stalk, playing a central role in the interaction of the ribosome with GTP-bound translation factors.</text>
</comment>
<comment type="subunit">
    <text evidence="1">Part of the ribosomal stalk of the 50S ribosomal subunit. The N-terminus interacts with L11 and the large rRNA to form the base of the stalk. The C-terminus forms an elongated spine to which L12 dimers bind in a sequential fashion forming a multimeric L10(L12)X complex.</text>
</comment>
<comment type="similarity">
    <text evidence="1">Belongs to the universal ribosomal protein uL10 family.</text>
</comment>
<gene>
    <name evidence="1" type="primary">rplJ</name>
    <name type="ordered locus">BL1549</name>
</gene>
<keyword id="KW-1185">Reference proteome</keyword>
<keyword id="KW-0687">Ribonucleoprotein</keyword>
<keyword id="KW-0689">Ribosomal protein</keyword>
<keyword id="KW-0694">RNA-binding</keyword>
<keyword id="KW-0699">rRNA-binding</keyword>
<evidence type="ECO:0000255" key="1">
    <source>
        <dbReference type="HAMAP-Rule" id="MF_00362"/>
    </source>
</evidence>
<evidence type="ECO:0000305" key="2"/>
<name>RL10_BIFLO</name>
<feature type="chain" id="PRO_0000154592" description="Large ribosomal subunit protein uL10">
    <location>
        <begin position="1"/>
        <end position="173"/>
    </location>
</feature>
<organism>
    <name type="scientific">Bifidobacterium longum (strain NCC 2705)</name>
    <dbReference type="NCBI Taxonomy" id="206672"/>
    <lineage>
        <taxon>Bacteria</taxon>
        <taxon>Bacillati</taxon>
        <taxon>Actinomycetota</taxon>
        <taxon>Actinomycetes</taxon>
        <taxon>Bifidobacteriales</taxon>
        <taxon>Bifidobacteriaceae</taxon>
        <taxon>Bifidobacterium</taxon>
    </lineage>
</organism>
<accession>Q8G444</accession>
<proteinExistence type="inferred from homology"/>
<dbReference type="EMBL" id="AE014295">
    <property type="protein sequence ID" value="AAN25341.1"/>
    <property type="molecule type" value="Genomic_DNA"/>
</dbReference>
<dbReference type="RefSeq" id="NP_696705.1">
    <property type="nucleotide sequence ID" value="NC_004307.2"/>
</dbReference>
<dbReference type="RefSeq" id="WP_007053001.1">
    <property type="nucleotide sequence ID" value="NC_004307.2"/>
</dbReference>
<dbReference type="SMR" id="Q8G444"/>
<dbReference type="STRING" id="206672.BL1549"/>
<dbReference type="EnsemblBacteria" id="AAN25341">
    <property type="protein sequence ID" value="AAN25341"/>
    <property type="gene ID" value="BL1549"/>
</dbReference>
<dbReference type="GeneID" id="69578932"/>
<dbReference type="KEGG" id="blo:BL1549"/>
<dbReference type="PATRIC" id="fig|206672.9.peg.1603"/>
<dbReference type="HOGENOM" id="CLU_092227_1_0_11"/>
<dbReference type="OrthoDB" id="3186107at2"/>
<dbReference type="PhylomeDB" id="Q8G444"/>
<dbReference type="Proteomes" id="UP000000439">
    <property type="component" value="Chromosome"/>
</dbReference>
<dbReference type="GO" id="GO:0015934">
    <property type="term" value="C:large ribosomal subunit"/>
    <property type="evidence" value="ECO:0007669"/>
    <property type="project" value="InterPro"/>
</dbReference>
<dbReference type="GO" id="GO:0070180">
    <property type="term" value="F:large ribosomal subunit rRNA binding"/>
    <property type="evidence" value="ECO:0007669"/>
    <property type="project" value="UniProtKB-UniRule"/>
</dbReference>
<dbReference type="GO" id="GO:0003735">
    <property type="term" value="F:structural constituent of ribosome"/>
    <property type="evidence" value="ECO:0007669"/>
    <property type="project" value="InterPro"/>
</dbReference>
<dbReference type="GO" id="GO:0006412">
    <property type="term" value="P:translation"/>
    <property type="evidence" value="ECO:0007669"/>
    <property type="project" value="UniProtKB-UniRule"/>
</dbReference>
<dbReference type="CDD" id="cd05797">
    <property type="entry name" value="Ribosomal_L10"/>
    <property type="match status" value="1"/>
</dbReference>
<dbReference type="Gene3D" id="3.30.70.1730">
    <property type="match status" value="1"/>
</dbReference>
<dbReference type="Gene3D" id="6.10.250.290">
    <property type="match status" value="1"/>
</dbReference>
<dbReference type="HAMAP" id="MF_00362">
    <property type="entry name" value="Ribosomal_uL10"/>
    <property type="match status" value="1"/>
</dbReference>
<dbReference type="InterPro" id="IPR001790">
    <property type="entry name" value="Ribosomal_uL10"/>
</dbReference>
<dbReference type="InterPro" id="IPR043141">
    <property type="entry name" value="Ribosomal_uL10-like_sf"/>
</dbReference>
<dbReference type="InterPro" id="IPR022973">
    <property type="entry name" value="Ribosomal_uL10_bac"/>
</dbReference>
<dbReference type="InterPro" id="IPR047865">
    <property type="entry name" value="Ribosomal_uL10_bac_type"/>
</dbReference>
<dbReference type="InterPro" id="IPR002363">
    <property type="entry name" value="Ribosomal_uL10_CS_bac"/>
</dbReference>
<dbReference type="NCBIfam" id="NF000955">
    <property type="entry name" value="PRK00099.1-1"/>
    <property type="match status" value="1"/>
</dbReference>
<dbReference type="PANTHER" id="PTHR11560">
    <property type="entry name" value="39S RIBOSOMAL PROTEIN L10, MITOCHONDRIAL"/>
    <property type="match status" value="1"/>
</dbReference>
<dbReference type="Pfam" id="PF00466">
    <property type="entry name" value="Ribosomal_L10"/>
    <property type="match status" value="1"/>
</dbReference>
<dbReference type="SUPFAM" id="SSF160369">
    <property type="entry name" value="Ribosomal protein L10-like"/>
    <property type="match status" value="1"/>
</dbReference>
<dbReference type="PROSITE" id="PS01109">
    <property type="entry name" value="RIBOSOMAL_L10"/>
    <property type="match status" value="1"/>
</dbReference>
<protein>
    <recommendedName>
        <fullName evidence="1">Large ribosomal subunit protein uL10</fullName>
    </recommendedName>
    <alternativeName>
        <fullName evidence="2">50S ribosomal protein L10</fullName>
    </alternativeName>
</protein>
<sequence length="173" mass="18747">MKRPEKEAVVAQLTEEFRNADAVYLTEYRGLTVPQISDLREKLGRDTSYTVAKNTLARIAAKEAGIEGLDEILSGPTAITFVKGDFIEAAKVIRDFAKDNKALVIKGAAADGTVYDAEGAKKLADLKSRPQLLAEFAGDIKASMAKAAYLFNALPTKAVRTIDALREKQEKAA</sequence>